<accession>A0KRY0</accession>
<protein>
    <recommendedName>
        <fullName evidence="1">Catalase-peroxidase 1</fullName>
        <shortName evidence="1">CP 1</shortName>
        <ecNumber evidence="1">1.11.1.21</ecNumber>
    </recommendedName>
    <alternativeName>
        <fullName evidence="1">Peroxidase/catalase 1</fullName>
    </alternativeName>
</protein>
<name>KATG1_SHESA</name>
<evidence type="ECO:0000255" key="1">
    <source>
        <dbReference type="HAMAP-Rule" id="MF_01961"/>
    </source>
</evidence>
<sequence>MDKTQSSQGKCPVMHGANSAVASNNMDWWPKALNLDILHQHDKKTDPMDPKFNYRDAFNSLDLAAVKRDLNALMTDSQDWWPADWGHYGGLMIRMAWHSAGTYRVADGRGGAGTGNQRFAPLNSWPDNANLDKARRLLWPIKKKYGNKLSWADLMILAGNVAYESMGLKTYGFAGGREDIWHPEKDIYWGSEKQWLAPTENPNSRYSGERDLENPLAAVMMGLIYVNPEGVDGKPDPLRTAQDVRVTFARMAMNDEETVALTAGGHTVGKCHGNGKAQDLGPEPEGEELEAQGLGWLNKKGPGTGANAVTSGLEGAWTTHPTQWDNGYFHLLLNYDWELKKSPAGASQWEPINIKEEDKVVSVGDPNRKFNPIMTDADMAMKMDPEYRKISEKFYQDPAYFSEVFARAWFKLTHRDLGPKSRYLGPEVPNEDLLWQDPIPSVDYRLDASEIVELKAKLLASGLSVSDLVATAWDSARTFRGSDFRGGANGARIRLAPQKDWQANEPERLQKVLKVLIELQASLSKKVSIADLIVLGGAAAIEKAAHAAGVKITVPFIPGRGDATQEMTDVESFAVLEPLHDAYRNWQKKDYVVQPEEMMLDRTQLMGLTAHEMTVLIGGMRVLGTNYGGTRHGVFTDKVGVLTNDFFVNLTDMAYNWKPAGSNLYEIVERKTGAVKWTATRVDLVFGSNSILRSYAEVYAQDDAKEKFVHDFVAAWTKVMNADRFDLA</sequence>
<gene>
    <name evidence="1" type="primary">katG1</name>
    <name type="ordered locus">Shewana3_0306</name>
</gene>
<comment type="function">
    <text evidence="1">Bifunctional enzyme with both catalase and broad-spectrum peroxidase activity.</text>
</comment>
<comment type="catalytic activity">
    <reaction evidence="1">
        <text>H2O2 + AH2 = A + 2 H2O</text>
        <dbReference type="Rhea" id="RHEA:30275"/>
        <dbReference type="ChEBI" id="CHEBI:13193"/>
        <dbReference type="ChEBI" id="CHEBI:15377"/>
        <dbReference type="ChEBI" id="CHEBI:16240"/>
        <dbReference type="ChEBI" id="CHEBI:17499"/>
        <dbReference type="EC" id="1.11.1.21"/>
    </reaction>
</comment>
<comment type="catalytic activity">
    <reaction evidence="1">
        <text>2 H2O2 = O2 + 2 H2O</text>
        <dbReference type="Rhea" id="RHEA:20309"/>
        <dbReference type="ChEBI" id="CHEBI:15377"/>
        <dbReference type="ChEBI" id="CHEBI:15379"/>
        <dbReference type="ChEBI" id="CHEBI:16240"/>
        <dbReference type="EC" id="1.11.1.21"/>
    </reaction>
</comment>
<comment type="cofactor">
    <cofactor evidence="1">
        <name>heme b</name>
        <dbReference type="ChEBI" id="CHEBI:60344"/>
    </cofactor>
    <text evidence="1">Binds 1 heme b (iron(II)-protoporphyrin IX) group per dimer.</text>
</comment>
<comment type="subunit">
    <text evidence="1">Homodimer or homotetramer.</text>
</comment>
<comment type="PTM">
    <text evidence="1">Formation of the three residue Trp-Tyr-Met cross-link is important for the catalase, but not the peroxidase activity of the enzyme.</text>
</comment>
<comment type="similarity">
    <text evidence="1">Belongs to the peroxidase family. Peroxidase/catalase subfamily.</text>
</comment>
<dbReference type="EC" id="1.11.1.21" evidence="1"/>
<dbReference type="EMBL" id="CP000469">
    <property type="protein sequence ID" value="ABK46549.1"/>
    <property type="molecule type" value="Genomic_DNA"/>
</dbReference>
<dbReference type="RefSeq" id="WP_011715540.1">
    <property type="nucleotide sequence ID" value="NC_008577.1"/>
</dbReference>
<dbReference type="SMR" id="A0KRY0"/>
<dbReference type="STRING" id="94122.Shewana3_0306"/>
<dbReference type="PeroxiBase" id="3616">
    <property type="entry name" value="SHspCP01_ANA-3"/>
</dbReference>
<dbReference type="KEGG" id="shn:Shewana3_0306"/>
<dbReference type="eggNOG" id="COG0376">
    <property type="taxonomic scope" value="Bacteria"/>
</dbReference>
<dbReference type="HOGENOM" id="CLU_025424_2_0_6"/>
<dbReference type="OrthoDB" id="9759743at2"/>
<dbReference type="Proteomes" id="UP000002589">
    <property type="component" value="Chromosome"/>
</dbReference>
<dbReference type="GO" id="GO:0005829">
    <property type="term" value="C:cytosol"/>
    <property type="evidence" value="ECO:0007669"/>
    <property type="project" value="TreeGrafter"/>
</dbReference>
<dbReference type="GO" id="GO:0004096">
    <property type="term" value="F:catalase activity"/>
    <property type="evidence" value="ECO:0007669"/>
    <property type="project" value="UniProtKB-UniRule"/>
</dbReference>
<dbReference type="GO" id="GO:0020037">
    <property type="term" value="F:heme binding"/>
    <property type="evidence" value="ECO:0007669"/>
    <property type="project" value="InterPro"/>
</dbReference>
<dbReference type="GO" id="GO:0046872">
    <property type="term" value="F:metal ion binding"/>
    <property type="evidence" value="ECO:0007669"/>
    <property type="project" value="UniProtKB-KW"/>
</dbReference>
<dbReference type="GO" id="GO:0070301">
    <property type="term" value="P:cellular response to hydrogen peroxide"/>
    <property type="evidence" value="ECO:0007669"/>
    <property type="project" value="TreeGrafter"/>
</dbReference>
<dbReference type="GO" id="GO:0042744">
    <property type="term" value="P:hydrogen peroxide catabolic process"/>
    <property type="evidence" value="ECO:0007669"/>
    <property type="project" value="UniProtKB-KW"/>
</dbReference>
<dbReference type="CDD" id="cd00649">
    <property type="entry name" value="catalase_peroxidase_1"/>
    <property type="match status" value="1"/>
</dbReference>
<dbReference type="CDD" id="cd08200">
    <property type="entry name" value="catalase_peroxidase_2"/>
    <property type="match status" value="1"/>
</dbReference>
<dbReference type="FunFam" id="1.10.420.10:FF:000002">
    <property type="entry name" value="Catalase-peroxidase"/>
    <property type="match status" value="1"/>
</dbReference>
<dbReference type="FunFam" id="1.10.420.10:FF:000004">
    <property type="entry name" value="Catalase-peroxidase"/>
    <property type="match status" value="1"/>
</dbReference>
<dbReference type="FunFam" id="1.10.520.10:FF:000002">
    <property type="entry name" value="Catalase-peroxidase"/>
    <property type="match status" value="1"/>
</dbReference>
<dbReference type="Gene3D" id="1.10.520.10">
    <property type="match status" value="2"/>
</dbReference>
<dbReference type="Gene3D" id="1.10.420.10">
    <property type="entry name" value="Peroxidase, domain 2"/>
    <property type="match status" value="2"/>
</dbReference>
<dbReference type="HAMAP" id="MF_01961">
    <property type="entry name" value="Catal_peroxid"/>
    <property type="match status" value="1"/>
</dbReference>
<dbReference type="InterPro" id="IPR000763">
    <property type="entry name" value="Catalase_peroxidase"/>
</dbReference>
<dbReference type="InterPro" id="IPR002016">
    <property type="entry name" value="Haem_peroxidase"/>
</dbReference>
<dbReference type="InterPro" id="IPR010255">
    <property type="entry name" value="Haem_peroxidase_sf"/>
</dbReference>
<dbReference type="InterPro" id="IPR019794">
    <property type="entry name" value="Peroxidases_AS"/>
</dbReference>
<dbReference type="NCBIfam" id="TIGR00198">
    <property type="entry name" value="cat_per_HPI"/>
    <property type="match status" value="1"/>
</dbReference>
<dbReference type="NCBIfam" id="NF011635">
    <property type="entry name" value="PRK15061.1"/>
    <property type="match status" value="1"/>
</dbReference>
<dbReference type="PANTHER" id="PTHR30555:SF6">
    <property type="entry name" value="CATALASE-PEROXIDASE"/>
    <property type="match status" value="1"/>
</dbReference>
<dbReference type="PANTHER" id="PTHR30555">
    <property type="entry name" value="HYDROPEROXIDASE I, BIFUNCTIONAL CATALASE-PEROXIDASE"/>
    <property type="match status" value="1"/>
</dbReference>
<dbReference type="Pfam" id="PF00141">
    <property type="entry name" value="peroxidase"/>
    <property type="match status" value="2"/>
</dbReference>
<dbReference type="PRINTS" id="PR00460">
    <property type="entry name" value="BPEROXIDASE"/>
</dbReference>
<dbReference type="PRINTS" id="PR00458">
    <property type="entry name" value="PEROXIDASE"/>
</dbReference>
<dbReference type="SUPFAM" id="SSF48113">
    <property type="entry name" value="Heme-dependent peroxidases"/>
    <property type="match status" value="2"/>
</dbReference>
<dbReference type="PROSITE" id="PS00436">
    <property type="entry name" value="PEROXIDASE_2"/>
    <property type="match status" value="1"/>
</dbReference>
<dbReference type="PROSITE" id="PS50873">
    <property type="entry name" value="PEROXIDASE_4"/>
    <property type="match status" value="1"/>
</dbReference>
<proteinExistence type="inferred from homology"/>
<reference key="1">
    <citation type="submission" date="2006-09" db="EMBL/GenBank/DDBJ databases">
        <title>Complete sequence of chromosome 1 of Shewanella sp. ANA-3.</title>
        <authorList>
            <person name="Copeland A."/>
            <person name="Lucas S."/>
            <person name="Lapidus A."/>
            <person name="Barry K."/>
            <person name="Detter J.C."/>
            <person name="Glavina del Rio T."/>
            <person name="Hammon N."/>
            <person name="Israni S."/>
            <person name="Dalin E."/>
            <person name="Tice H."/>
            <person name="Pitluck S."/>
            <person name="Chertkov O."/>
            <person name="Brettin T."/>
            <person name="Bruce D."/>
            <person name="Han C."/>
            <person name="Tapia R."/>
            <person name="Gilna P."/>
            <person name="Schmutz J."/>
            <person name="Larimer F."/>
            <person name="Land M."/>
            <person name="Hauser L."/>
            <person name="Kyrpides N."/>
            <person name="Kim E."/>
            <person name="Newman D."/>
            <person name="Salticov C."/>
            <person name="Konstantinidis K."/>
            <person name="Klappenback J."/>
            <person name="Tiedje J."/>
            <person name="Richardson P."/>
        </authorList>
    </citation>
    <scope>NUCLEOTIDE SEQUENCE [LARGE SCALE GENOMIC DNA]</scope>
    <source>
        <strain>ANA-3</strain>
    </source>
</reference>
<keyword id="KW-0349">Heme</keyword>
<keyword id="KW-0376">Hydrogen peroxide</keyword>
<keyword id="KW-0408">Iron</keyword>
<keyword id="KW-0479">Metal-binding</keyword>
<keyword id="KW-0560">Oxidoreductase</keyword>
<keyword id="KW-0575">Peroxidase</keyword>
<keyword id="KW-0732">Signal</keyword>
<organism>
    <name type="scientific">Shewanella sp. (strain ANA-3)</name>
    <dbReference type="NCBI Taxonomy" id="94122"/>
    <lineage>
        <taxon>Bacteria</taxon>
        <taxon>Pseudomonadati</taxon>
        <taxon>Pseudomonadota</taxon>
        <taxon>Gammaproteobacteria</taxon>
        <taxon>Alteromonadales</taxon>
        <taxon>Shewanellaceae</taxon>
        <taxon>Shewanella</taxon>
    </lineage>
</organism>
<feature type="signal peptide" evidence="1">
    <location>
        <begin position="1"/>
        <end position="22"/>
    </location>
</feature>
<feature type="chain" id="PRO_0000354923" description="Catalase-peroxidase 1">
    <location>
        <begin position="23"/>
        <end position="728"/>
    </location>
</feature>
<feature type="active site" description="Proton acceptor" evidence="1">
    <location>
        <position position="98"/>
    </location>
</feature>
<feature type="binding site" description="axial binding residue" evidence="1">
    <location>
        <position position="266"/>
    </location>
    <ligand>
        <name>heme b</name>
        <dbReference type="ChEBI" id="CHEBI:60344"/>
    </ligand>
    <ligandPart>
        <name>Fe</name>
        <dbReference type="ChEBI" id="CHEBI:18248"/>
    </ligandPart>
</feature>
<feature type="site" description="Transition state stabilizer" evidence="1">
    <location>
        <position position="94"/>
    </location>
</feature>
<feature type="cross-link" description="Tryptophyl-tyrosyl-methioninium (Trp-Tyr) (with M-251)" evidence="1">
    <location>
        <begin position="97"/>
        <end position="225"/>
    </location>
</feature>
<feature type="cross-link" description="Tryptophyl-tyrosyl-methioninium (Tyr-Met) (with W-97)" evidence="1">
    <location>
        <begin position="225"/>
        <end position="251"/>
    </location>
</feature>